<name>NELFA_MOUSE</name>
<proteinExistence type="evidence at protein level"/>
<protein>
    <recommendedName>
        <fullName>Negative elongation factor A</fullName>
        <shortName>NELF-A</shortName>
    </recommendedName>
    <alternativeName>
        <fullName>Wolf-Hirschhorn syndrome candidate 2 homolog</fullName>
        <shortName>mWHSC2</shortName>
    </alternativeName>
</protein>
<feature type="chain" id="PRO_0000219127" description="Negative elongation factor A">
    <location>
        <begin position="1"/>
        <end position="530"/>
    </location>
</feature>
<feature type="domain" description="HDAg" evidence="2">
    <location>
        <begin position="89"/>
        <end position="248"/>
    </location>
</feature>
<feature type="region of interest" description="NELF-C/D-binding" evidence="2">
    <location>
        <begin position="125"/>
        <end position="188"/>
    </location>
</feature>
<feature type="region of interest" description="RNAPII-binding" evidence="2">
    <location>
        <begin position="189"/>
        <end position="248"/>
    </location>
</feature>
<feature type="region of interest" description="Disordered" evidence="3">
    <location>
        <begin position="213"/>
        <end position="248"/>
    </location>
</feature>
<feature type="region of interest" description="Disordered" evidence="3">
    <location>
        <begin position="266"/>
        <end position="296"/>
    </location>
</feature>
<feature type="region of interest" description="Disordered" evidence="3">
    <location>
        <begin position="312"/>
        <end position="409"/>
    </location>
</feature>
<feature type="compositionally biased region" description="Polar residues" evidence="3">
    <location>
        <begin position="225"/>
        <end position="238"/>
    </location>
</feature>
<feature type="compositionally biased region" description="Basic and acidic residues" evidence="3">
    <location>
        <begin position="277"/>
        <end position="291"/>
    </location>
</feature>
<feature type="compositionally biased region" description="Low complexity" evidence="3">
    <location>
        <begin position="315"/>
        <end position="341"/>
    </location>
</feature>
<feature type="modified residue" description="Phosphothreonine" evidence="1">
    <location>
        <position position="157"/>
    </location>
</feature>
<feature type="modified residue" description="Phosphoserine" evidence="1">
    <location>
        <position position="225"/>
    </location>
</feature>
<feature type="modified residue" description="Phosphoserine" evidence="1">
    <location>
        <position position="233"/>
    </location>
</feature>
<feature type="modified residue" description="Phosphothreonine" evidence="1">
    <location>
        <position position="277"/>
    </location>
</feature>
<feature type="modified residue" description="Phosphoserine" evidence="1">
    <location>
        <position position="363"/>
    </location>
</feature>
<feature type="sequence conflict" description="In Ref. 1; BAC37379." evidence="6" ref="1">
    <original>P</original>
    <variation>Q</variation>
    <location>
        <position position="64"/>
    </location>
</feature>
<feature type="sequence conflict" description="In Ref. 3; AAC72983." evidence="6" ref="3">
    <original>K</original>
    <variation>N</variation>
    <location>
        <position position="72"/>
    </location>
</feature>
<feature type="sequence conflict" description="In Ref. 3; AAC72983." evidence="6" ref="3">
    <original>D</original>
    <variation>E</variation>
    <location>
        <position position="119"/>
    </location>
</feature>
<feature type="sequence conflict" description="In Ref. 3; AAC72983." evidence="6" ref="3">
    <original>K</original>
    <variation>I</variation>
    <location>
        <position position="181"/>
    </location>
</feature>
<feature type="sequence conflict" description="In Ref. 3; AAC72983." evidence="6" ref="3">
    <original>P</original>
    <variation>T</variation>
    <location>
        <position position="347"/>
    </location>
</feature>
<feature type="sequence conflict" description="In Ref. 3; AAC72983." evidence="6" ref="3">
    <original>L</original>
    <variation>V</variation>
    <location>
        <position position="381"/>
    </location>
</feature>
<feature type="sequence conflict" description="In Ref. 3; AAC72983." evidence="6" ref="3">
    <location>
        <begin position="386"/>
        <end position="387"/>
    </location>
</feature>
<feature type="sequence conflict" description="In Ref. 3; AAC72983." evidence="6" ref="3">
    <original>LTP</original>
    <variation>RTH</variation>
    <location>
        <begin position="395"/>
        <end position="397"/>
    </location>
</feature>
<feature type="sequence conflict" description="In Ref. 1; BAC37379." evidence="6" ref="1">
    <original>Q</original>
    <variation>R</variation>
    <location>
        <position position="428"/>
    </location>
</feature>
<feature type="sequence conflict" description="In Ref. 3; AAC72983." evidence="6" ref="3">
    <original>L</original>
    <variation>F</variation>
    <location>
        <position position="435"/>
    </location>
</feature>
<reference key="1">
    <citation type="journal article" date="2005" name="Science">
        <title>The transcriptional landscape of the mammalian genome.</title>
        <authorList>
            <person name="Carninci P."/>
            <person name="Kasukawa T."/>
            <person name="Katayama S."/>
            <person name="Gough J."/>
            <person name="Frith M.C."/>
            <person name="Maeda N."/>
            <person name="Oyama R."/>
            <person name="Ravasi T."/>
            <person name="Lenhard B."/>
            <person name="Wells C."/>
            <person name="Kodzius R."/>
            <person name="Shimokawa K."/>
            <person name="Bajic V.B."/>
            <person name="Brenner S.E."/>
            <person name="Batalov S."/>
            <person name="Forrest A.R."/>
            <person name="Zavolan M."/>
            <person name="Davis M.J."/>
            <person name="Wilming L.G."/>
            <person name="Aidinis V."/>
            <person name="Allen J.E."/>
            <person name="Ambesi-Impiombato A."/>
            <person name="Apweiler R."/>
            <person name="Aturaliya R.N."/>
            <person name="Bailey T.L."/>
            <person name="Bansal M."/>
            <person name="Baxter L."/>
            <person name="Beisel K.W."/>
            <person name="Bersano T."/>
            <person name="Bono H."/>
            <person name="Chalk A.M."/>
            <person name="Chiu K.P."/>
            <person name="Choudhary V."/>
            <person name="Christoffels A."/>
            <person name="Clutterbuck D.R."/>
            <person name="Crowe M.L."/>
            <person name="Dalla E."/>
            <person name="Dalrymple B.P."/>
            <person name="de Bono B."/>
            <person name="Della Gatta G."/>
            <person name="di Bernardo D."/>
            <person name="Down T."/>
            <person name="Engstrom P."/>
            <person name="Fagiolini M."/>
            <person name="Faulkner G."/>
            <person name="Fletcher C.F."/>
            <person name="Fukushima T."/>
            <person name="Furuno M."/>
            <person name="Futaki S."/>
            <person name="Gariboldi M."/>
            <person name="Georgii-Hemming P."/>
            <person name="Gingeras T.R."/>
            <person name="Gojobori T."/>
            <person name="Green R.E."/>
            <person name="Gustincich S."/>
            <person name="Harbers M."/>
            <person name="Hayashi Y."/>
            <person name="Hensch T.K."/>
            <person name="Hirokawa N."/>
            <person name="Hill D."/>
            <person name="Huminiecki L."/>
            <person name="Iacono M."/>
            <person name="Ikeo K."/>
            <person name="Iwama A."/>
            <person name="Ishikawa T."/>
            <person name="Jakt M."/>
            <person name="Kanapin A."/>
            <person name="Katoh M."/>
            <person name="Kawasawa Y."/>
            <person name="Kelso J."/>
            <person name="Kitamura H."/>
            <person name="Kitano H."/>
            <person name="Kollias G."/>
            <person name="Krishnan S.P."/>
            <person name="Kruger A."/>
            <person name="Kummerfeld S.K."/>
            <person name="Kurochkin I.V."/>
            <person name="Lareau L.F."/>
            <person name="Lazarevic D."/>
            <person name="Lipovich L."/>
            <person name="Liu J."/>
            <person name="Liuni S."/>
            <person name="McWilliam S."/>
            <person name="Madan Babu M."/>
            <person name="Madera M."/>
            <person name="Marchionni L."/>
            <person name="Matsuda H."/>
            <person name="Matsuzawa S."/>
            <person name="Miki H."/>
            <person name="Mignone F."/>
            <person name="Miyake S."/>
            <person name="Morris K."/>
            <person name="Mottagui-Tabar S."/>
            <person name="Mulder N."/>
            <person name="Nakano N."/>
            <person name="Nakauchi H."/>
            <person name="Ng P."/>
            <person name="Nilsson R."/>
            <person name="Nishiguchi S."/>
            <person name="Nishikawa S."/>
            <person name="Nori F."/>
            <person name="Ohara O."/>
            <person name="Okazaki Y."/>
            <person name="Orlando V."/>
            <person name="Pang K.C."/>
            <person name="Pavan W.J."/>
            <person name="Pavesi G."/>
            <person name="Pesole G."/>
            <person name="Petrovsky N."/>
            <person name="Piazza S."/>
            <person name="Reed J."/>
            <person name="Reid J.F."/>
            <person name="Ring B.Z."/>
            <person name="Ringwald M."/>
            <person name="Rost B."/>
            <person name="Ruan Y."/>
            <person name="Salzberg S.L."/>
            <person name="Sandelin A."/>
            <person name="Schneider C."/>
            <person name="Schoenbach C."/>
            <person name="Sekiguchi K."/>
            <person name="Semple C.A."/>
            <person name="Seno S."/>
            <person name="Sessa L."/>
            <person name="Sheng Y."/>
            <person name="Shibata Y."/>
            <person name="Shimada H."/>
            <person name="Shimada K."/>
            <person name="Silva D."/>
            <person name="Sinclair B."/>
            <person name="Sperling S."/>
            <person name="Stupka E."/>
            <person name="Sugiura K."/>
            <person name="Sultana R."/>
            <person name="Takenaka Y."/>
            <person name="Taki K."/>
            <person name="Tammoja K."/>
            <person name="Tan S.L."/>
            <person name="Tang S."/>
            <person name="Taylor M.S."/>
            <person name="Tegner J."/>
            <person name="Teichmann S.A."/>
            <person name="Ueda H.R."/>
            <person name="van Nimwegen E."/>
            <person name="Verardo R."/>
            <person name="Wei C.L."/>
            <person name="Yagi K."/>
            <person name="Yamanishi H."/>
            <person name="Zabarovsky E."/>
            <person name="Zhu S."/>
            <person name="Zimmer A."/>
            <person name="Hide W."/>
            <person name="Bult C."/>
            <person name="Grimmond S.M."/>
            <person name="Teasdale R.D."/>
            <person name="Liu E.T."/>
            <person name="Brusic V."/>
            <person name="Quackenbush J."/>
            <person name="Wahlestedt C."/>
            <person name="Mattick J.S."/>
            <person name="Hume D.A."/>
            <person name="Kai C."/>
            <person name="Sasaki D."/>
            <person name="Tomaru Y."/>
            <person name="Fukuda S."/>
            <person name="Kanamori-Katayama M."/>
            <person name="Suzuki M."/>
            <person name="Aoki J."/>
            <person name="Arakawa T."/>
            <person name="Iida J."/>
            <person name="Imamura K."/>
            <person name="Itoh M."/>
            <person name="Kato T."/>
            <person name="Kawaji H."/>
            <person name="Kawagashira N."/>
            <person name="Kawashima T."/>
            <person name="Kojima M."/>
            <person name="Kondo S."/>
            <person name="Konno H."/>
            <person name="Nakano K."/>
            <person name="Ninomiya N."/>
            <person name="Nishio T."/>
            <person name="Okada M."/>
            <person name="Plessy C."/>
            <person name="Shibata K."/>
            <person name="Shiraki T."/>
            <person name="Suzuki S."/>
            <person name="Tagami M."/>
            <person name="Waki K."/>
            <person name="Watahiki A."/>
            <person name="Okamura-Oho Y."/>
            <person name="Suzuki H."/>
            <person name="Kawai J."/>
            <person name="Hayashizaki Y."/>
        </authorList>
    </citation>
    <scope>NUCLEOTIDE SEQUENCE [LARGE SCALE MRNA]</scope>
    <source>
        <strain>C57BL/6J</strain>
        <strain>NOD</strain>
        <tissue>Embryo</tissue>
        <tissue>Thymus</tissue>
    </source>
</reference>
<reference key="2">
    <citation type="journal article" date="2004" name="Genome Res.">
        <title>The status, quality, and expansion of the NIH full-length cDNA project: the Mammalian Gene Collection (MGC).</title>
        <authorList>
            <consortium name="The MGC Project Team"/>
        </authorList>
    </citation>
    <scope>NUCLEOTIDE SEQUENCE [LARGE SCALE MRNA]</scope>
    <source>
        <strain>FVB/N</strain>
        <tissue>Mammary tumor</tissue>
        <tissue>Salivary gland</tissue>
    </source>
</reference>
<reference key="3">
    <citation type="journal article" date="1999" name="Genomics">
        <title>Comparative analysis of a novel gene from the Wolf-Hirschhorn/Pitt-Rogers-Danks syndrome critical region.</title>
        <authorList>
            <person name="Wright T.J."/>
            <person name="Costa J.L."/>
            <person name="Naranjo C."/>
            <person name="Francis-West P."/>
            <person name="Altherr M.R."/>
        </authorList>
    </citation>
    <scope>NUCLEOTIDE SEQUENCE [MRNA] OF 8-530</scope>
    <scope>TISSUE SPECIFICITY</scope>
</reference>
<reference key="4">
    <citation type="journal article" date="2010" name="Cell">
        <title>A tissue-specific atlas of mouse protein phosphorylation and expression.</title>
        <authorList>
            <person name="Huttlin E.L."/>
            <person name="Jedrychowski M.P."/>
            <person name="Elias J.E."/>
            <person name="Goswami T."/>
            <person name="Rad R."/>
            <person name="Beausoleil S.A."/>
            <person name="Villen J."/>
            <person name="Haas W."/>
            <person name="Sowa M.E."/>
            <person name="Gygi S.P."/>
        </authorList>
    </citation>
    <scope>IDENTIFICATION BY MASS SPECTROMETRY [LARGE SCALE ANALYSIS]</scope>
    <source>
        <tissue>Spleen</tissue>
        <tissue>Testis</tissue>
    </source>
</reference>
<reference key="5">
    <citation type="journal article" date="2015" name="PLoS ONE">
        <title>Translational initiation at a non-AUG start codon for human and mouse negative elongation factor-B.</title>
        <authorList>
            <person name="Pan H."/>
            <person name="Zhao X."/>
            <person name="Zhang X."/>
            <person name="Abouelsoud M."/>
            <person name="Sun J."/>
            <person name="April C."/>
            <person name="Amleh A."/>
            <person name="Fan J.B."/>
            <person name="Hu Y."/>
            <person name="Li R."/>
        </authorList>
    </citation>
    <scope>INTERACTION WITH NELFB</scope>
</reference>
<evidence type="ECO:0000250" key="1">
    <source>
        <dbReference type="UniProtKB" id="Q9H3P2"/>
    </source>
</evidence>
<evidence type="ECO:0000255" key="2">
    <source>
        <dbReference type="PROSITE-ProRule" id="PRU01183"/>
    </source>
</evidence>
<evidence type="ECO:0000256" key="3">
    <source>
        <dbReference type="SAM" id="MobiDB-lite"/>
    </source>
</evidence>
<evidence type="ECO:0000269" key="4">
    <source>
    </source>
</evidence>
<evidence type="ECO:0000269" key="5">
    <source>
    </source>
</evidence>
<evidence type="ECO:0000305" key="6"/>
<comment type="function">
    <text evidence="1">Essential component of the NELF complex, a complex that negatively regulates the elongation of transcription by RNA polymerase II (By similarity). The NELF complex, which acts via an association with the DSIF complex and causes transcriptional pausing, is counteracted by the P-TEFb kinase complex (By similarity).</text>
</comment>
<comment type="subunit">
    <text evidence="1 5">The NELF complex is composed of NELFA, NELFB, NELFCD and NELFE; NELFA and NELFCD form a stable subcomplex that binds to the N-terminus of NELFB (By similarity). In vitro, the NELFA:NELFCD subcomplex binds to ssDNA and ssRNA in a sequence- and structure-dependent manner (By similarity). Interacts with the RNA polymerase II complex when it is not phosphorylated by P-TEFb (By similarity). Interacts with NELFB (PubMed:26010750).</text>
</comment>
<comment type="subcellular location">
    <subcellularLocation>
        <location evidence="1">Nucleus</location>
    </subcellularLocation>
</comment>
<comment type="tissue specificity">
    <text evidence="4">Ubiquitous. Expressed in brain, heart, spleen, lung, liver, muscle, kidney and testis. Already expressed in 7 dpc embryos.</text>
</comment>
<comment type="domain">
    <text evidence="1">The HDAg-like domain is essential for transcriptional repression, and mediates the interaction with the RNA polymerase II complex.</text>
</comment>
<comment type="similarity">
    <text evidence="6">Belongs to the NELF-A family.</text>
</comment>
<comment type="sequence caution" evidence="6">
    <conflict type="erroneous initiation">
        <sequence resource="EMBL-CDS" id="BAC37379"/>
    </conflict>
</comment>
<sequence>MASMRESDTGLWLHNKLGATDELWAPPSIASLLTAAVIDNIRLCFHRLSSAVKLKLLLGTLHLPRRTVDEMKAALMDIIQLATLDSDPWVLMVADILKSFPDTGSLNLDLEEQNPNVQDILGELREKVSECEASAMLPLECQYLNKNALTTLAGPLTPPVKHFQLKRKPKSATLRAELLQKSTETAQQLKRSAGVPFHAKGRGLLRKMDTTTPLKGIPKQAPFRSPTTPSVFSPSGNRTPIPPSRTPLQKERGVKLLDISELNTVGAGREAKRRRKTLDTEVVEKPTKEETVVENATPDYAAGLVSTQKLGSLNSEPTLPSTSYLPSTPSVVPASSYIPSSETPPAPPSREASRPPEEPSAPSPTLPTQFKQRAPMYNSGLSPATPAPAAPTSPLTPTTPPAVTPTAQTPPVAMVAPQTQAPAPVQQQPKKNLSLTREQMFAAQEMFKTANKVTRPEKALILGFMAGSRENPCPEQGDVIQIKLSEHTEDLPKADGQGSTTMLVDTVFEMNYATGQWTRFKKYKPMTNVS</sequence>
<organism>
    <name type="scientific">Mus musculus</name>
    <name type="common">Mouse</name>
    <dbReference type="NCBI Taxonomy" id="10090"/>
    <lineage>
        <taxon>Eukaryota</taxon>
        <taxon>Metazoa</taxon>
        <taxon>Chordata</taxon>
        <taxon>Craniata</taxon>
        <taxon>Vertebrata</taxon>
        <taxon>Euteleostomi</taxon>
        <taxon>Mammalia</taxon>
        <taxon>Eutheria</taxon>
        <taxon>Euarchontoglires</taxon>
        <taxon>Glires</taxon>
        <taxon>Rodentia</taxon>
        <taxon>Myomorpha</taxon>
        <taxon>Muroidea</taxon>
        <taxon>Muridae</taxon>
        <taxon>Murinae</taxon>
        <taxon>Mus</taxon>
        <taxon>Mus</taxon>
    </lineage>
</organism>
<keyword id="KW-0539">Nucleus</keyword>
<keyword id="KW-0597">Phosphoprotein</keyword>
<keyword id="KW-1185">Reference proteome</keyword>
<keyword id="KW-0678">Repressor</keyword>
<keyword id="KW-0804">Transcription</keyword>
<keyword id="KW-0805">Transcription regulation</keyword>
<dbReference type="EMBL" id="AK012673">
    <property type="protein sequence ID" value="BAB28399.1"/>
    <property type="molecule type" value="mRNA"/>
</dbReference>
<dbReference type="EMBL" id="AK078760">
    <property type="protein sequence ID" value="BAC37379.1"/>
    <property type="status" value="ALT_INIT"/>
    <property type="molecule type" value="mRNA"/>
</dbReference>
<dbReference type="EMBL" id="AK088384">
    <property type="protein sequence ID" value="BAC40319.1"/>
    <property type="molecule type" value="mRNA"/>
</dbReference>
<dbReference type="EMBL" id="BC018423">
    <property type="protein sequence ID" value="AAH18423.1"/>
    <property type="molecule type" value="mRNA"/>
</dbReference>
<dbReference type="EMBL" id="BC038003">
    <property type="protein sequence ID" value="AAH38003.1"/>
    <property type="molecule type" value="mRNA"/>
</dbReference>
<dbReference type="EMBL" id="AF101435">
    <property type="protein sequence ID" value="AAC72983.1"/>
    <property type="molecule type" value="mRNA"/>
</dbReference>
<dbReference type="CCDS" id="CCDS19208.1"/>
<dbReference type="RefSeq" id="NP_036044.1">
    <property type="nucleotide sequence ID" value="NM_011914.4"/>
</dbReference>
<dbReference type="SMR" id="Q8BG30"/>
<dbReference type="BioGRID" id="204907">
    <property type="interactions" value="8"/>
</dbReference>
<dbReference type="FunCoup" id="Q8BG30">
    <property type="interactions" value="4965"/>
</dbReference>
<dbReference type="IntAct" id="Q8BG30">
    <property type="interactions" value="5"/>
</dbReference>
<dbReference type="STRING" id="10090.ENSMUSP00000030993"/>
<dbReference type="GlyGen" id="Q8BG30">
    <property type="glycosylation" value="4 sites, 1 O-linked glycan (1 site)"/>
</dbReference>
<dbReference type="iPTMnet" id="Q8BG30"/>
<dbReference type="PhosphoSitePlus" id="Q8BG30"/>
<dbReference type="jPOST" id="Q8BG30"/>
<dbReference type="PaxDb" id="10090-ENSMUSP00000030993"/>
<dbReference type="ProteomicsDB" id="252805"/>
<dbReference type="Pumba" id="Q8BG30"/>
<dbReference type="Antibodypedia" id="4097">
    <property type="antibodies" value="201 antibodies from 26 providers"/>
</dbReference>
<dbReference type="DNASU" id="24116"/>
<dbReference type="Ensembl" id="ENSMUST00000030993.8">
    <property type="protein sequence ID" value="ENSMUSP00000030993.7"/>
    <property type="gene ID" value="ENSMUSG00000029111.8"/>
</dbReference>
<dbReference type="GeneID" id="24116"/>
<dbReference type="KEGG" id="mmu:24116"/>
<dbReference type="UCSC" id="uc008xbn.1">
    <property type="organism name" value="mouse"/>
</dbReference>
<dbReference type="AGR" id="MGI:1346098"/>
<dbReference type="CTD" id="7469"/>
<dbReference type="MGI" id="MGI:1346098">
    <property type="gene designation" value="Nelfa"/>
</dbReference>
<dbReference type="VEuPathDB" id="HostDB:ENSMUSG00000029111"/>
<dbReference type="eggNOG" id="ENOG502QTCD">
    <property type="taxonomic scope" value="Eukaryota"/>
</dbReference>
<dbReference type="GeneTree" id="ENSGT00390000005342"/>
<dbReference type="HOGENOM" id="CLU_039060_1_0_1"/>
<dbReference type="InParanoid" id="Q8BG30"/>
<dbReference type="OMA" id="PLECHYL"/>
<dbReference type="OrthoDB" id="2135488at2759"/>
<dbReference type="PhylomeDB" id="Q8BG30"/>
<dbReference type="TreeFam" id="TF324956"/>
<dbReference type="Reactome" id="R-MMU-112382">
    <property type="pathway name" value="Formation of RNA Pol II elongation complex"/>
</dbReference>
<dbReference type="Reactome" id="R-MMU-113418">
    <property type="pathway name" value="Formation of the Early Elongation Complex"/>
</dbReference>
<dbReference type="Reactome" id="R-MMU-674695">
    <property type="pathway name" value="RNA Polymerase II Pre-transcription Events"/>
</dbReference>
<dbReference type="Reactome" id="R-MMU-6796648">
    <property type="pathway name" value="TP53 Regulates Transcription of DNA Repair Genes"/>
</dbReference>
<dbReference type="Reactome" id="R-MMU-75955">
    <property type="pathway name" value="RNA Polymerase II Transcription Elongation"/>
</dbReference>
<dbReference type="BioGRID-ORCS" id="24116">
    <property type="hits" value="20 hits in 80 CRISPR screens"/>
</dbReference>
<dbReference type="ChiTaRS" id="Nelfa">
    <property type="organism name" value="mouse"/>
</dbReference>
<dbReference type="PRO" id="PR:Q8BG30"/>
<dbReference type="Proteomes" id="UP000000589">
    <property type="component" value="Chromosome 5"/>
</dbReference>
<dbReference type="RNAct" id="Q8BG30">
    <property type="molecule type" value="protein"/>
</dbReference>
<dbReference type="Bgee" id="ENSMUSG00000029111">
    <property type="expression patterns" value="Expressed in secondary oocyte and 79 other cell types or tissues"/>
</dbReference>
<dbReference type="GO" id="GO:0005829">
    <property type="term" value="C:cytosol"/>
    <property type="evidence" value="ECO:0007669"/>
    <property type="project" value="Ensembl"/>
</dbReference>
<dbReference type="GO" id="GO:0032021">
    <property type="term" value="C:NELF complex"/>
    <property type="evidence" value="ECO:0000250"/>
    <property type="project" value="UniProtKB"/>
</dbReference>
<dbReference type="GO" id="GO:0016604">
    <property type="term" value="C:nuclear body"/>
    <property type="evidence" value="ECO:0007669"/>
    <property type="project" value="Ensembl"/>
</dbReference>
<dbReference type="GO" id="GO:0005634">
    <property type="term" value="C:nucleus"/>
    <property type="evidence" value="ECO:0000314"/>
    <property type="project" value="MGI"/>
</dbReference>
<dbReference type="GO" id="GO:0003682">
    <property type="term" value="F:chromatin binding"/>
    <property type="evidence" value="ECO:0000314"/>
    <property type="project" value="MGI"/>
</dbReference>
<dbReference type="GO" id="GO:0060090">
    <property type="term" value="F:molecular adaptor activity"/>
    <property type="evidence" value="ECO:0007669"/>
    <property type="project" value="Ensembl"/>
</dbReference>
<dbReference type="GO" id="GO:0034244">
    <property type="term" value="P:negative regulation of transcription elongation by RNA polymerase II"/>
    <property type="evidence" value="ECO:0000315"/>
    <property type="project" value="MGI"/>
</dbReference>
<dbReference type="GO" id="GO:0045944">
    <property type="term" value="P:positive regulation of transcription by RNA polymerase II"/>
    <property type="evidence" value="ECO:0007669"/>
    <property type="project" value="Ensembl"/>
</dbReference>
<dbReference type="InterPro" id="IPR037517">
    <property type="entry name" value="HDAG_dom"/>
</dbReference>
<dbReference type="InterPro" id="IPR052828">
    <property type="entry name" value="NELF-A_domain"/>
</dbReference>
<dbReference type="InterPro" id="IPR056557">
    <property type="entry name" value="NELF-A_N"/>
</dbReference>
<dbReference type="PANTHER" id="PTHR13328:SF4">
    <property type="entry name" value="NEGATIVE ELONGATION FACTOR A"/>
    <property type="match status" value="1"/>
</dbReference>
<dbReference type="PANTHER" id="PTHR13328">
    <property type="entry name" value="NEGATIVE ELONGATION FACTOR A NELF-A"/>
    <property type="match status" value="1"/>
</dbReference>
<dbReference type="Pfam" id="PF23553">
    <property type="entry name" value="NELF-A_N"/>
    <property type="match status" value="1"/>
</dbReference>
<dbReference type="PROSITE" id="PS51838">
    <property type="entry name" value="HDAG"/>
    <property type="match status" value="1"/>
</dbReference>
<gene>
    <name type="primary">Nelfa</name>
    <name type="synonym">Whsc2</name>
    <name type="synonym">Whsc2h</name>
</gene>
<accession>Q8BG30</accession>
<accession>Q8BVE4</accession>
<accession>Q8VEI7</accession>
<accession>Q9CSJ9</accession>
<accession>Q9Z1V9</accession>